<proteinExistence type="inferred from homology"/>
<sequence>MTRVSLSPLAWLDEVETQRRAAGLRRTVRTRPPVGAELDLASNDYLGLSQHPRVIDGGVSALRTWGAGSTGSRLVTGNTELHEAFEDVLAAFVGAESALVFSSGYTANLGAVVALSGPGSLLVSDANTHASLVDACRLSRARVVVTPHNDTAAVEQALATRSEARAVVVTDSVFSADGDLAPLRALHTACRKHGALLIVDEAHGLGVRGDGGRGLLDEVGLAGAPDLVMTTTLSKALGSQGGVVLGPAAVRAHLIDTARPFIFDTGLAPAAVGAAFAALQVLIDEPWRAQRVLDHAATLASICDVTEVPSSAVVSVILGEPEVAFAAAAACLDRGVRVGCFRPPTVPAGTSRLRLTARASLSEDEMTLARRVLTEVLSPR</sequence>
<organism>
    <name type="scientific">Mycolicibacterium vanbaalenii (strain DSM 7251 / JCM 13017 / BCRC 16820 / KCTC 9966 / NRRL B-24157 / PYR-1)</name>
    <name type="common">Mycobacterium vanbaalenii</name>
    <dbReference type="NCBI Taxonomy" id="350058"/>
    <lineage>
        <taxon>Bacteria</taxon>
        <taxon>Bacillati</taxon>
        <taxon>Actinomycetota</taxon>
        <taxon>Actinomycetes</taxon>
        <taxon>Mycobacteriales</taxon>
        <taxon>Mycobacteriaceae</taxon>
        <taxon>Mycolicibacterium</taxon>
    </lineage>
</organism>
<name>BIOF_MYCVP</name>
<protein>
    <recommendedName>
        <fullName>8-amino-7-oxononanoate synthase</fullName>
        <shortName>AONS</shortName>
        <ecNumber>2.3.1.47</ecNumber>
    </recommendedName>
    <alternativeName>
        <fullName>7-keto-8-amino-pelargonic acid synthase</fullName>
        <shortName>7-KAP synthase</shortName>
        <shortName>KAPA synthase</shortName>
    </alternativeName>
    <alternativeName>
        <fullName>8-amino-7-ketopelargonate synthase</fullName>
    </alternativeName>
    <alternativeName>
        <fullName>Alpha-oxoamine synthase</fullName>
    </alternativeName>
</protein>
<gene>
    <name type="ordered locus">Mvan_2789</name>
</gene>
<feature type="chain" id="PRO_0000381046" description="8-amino-7-oxononanoate synthase">
    <location>
        <begin position="1"/>
        <end position="380"/>
    </location>
</feature>
<feature type="binding site" evidence="1">
    <location>
        <position position="26"/>
    </location>
    <ligand>
        <name>substrate</name>
    </ligand>
</feature>
<feature type="binding site" evidence="1">
    <location>
        <begin position="104"/>
        <end position="105"/>
    </location>
    <ligand>
        <name>pyridoxal 5'-phosphate</name>
        <dbReference type="ChEBI" id="CHEBI:597326"/>
    </ligand>
</feature>
<feature type="binding site" evidence="1">
    <location>
        <position position="129"/>
    </location>
    <ligand>
        <name>substrate</name>
    </ligand>
</feature>
<feature type="binding site" evidence="1">
    <location>
        <position position="175"/>
    </location>
    <ligand>
        <name>pyridoxal 5'-phosphate</name>
        <dbReference type="ChEBI" id="CHEBI:597326"/>
    </ligand>
</feature>
<feature type="binding site" evidence="1">
    <location>
        <begin position="200"/>
        <end position="203"/>
    </location>
    <ligand>
        <name>pyridoxal 5'-phosphate</name>
        <dbReference type="ChEBI" id="CHEBI:597326"/>
    </ligand>
</feature>
<feature type="binding site" evidence="1">
    <location>
        <begin position="232"/>
        <end position="235"/>
    </location>
    <ligand>
        <name>pyridoxal 5'-phosphate</name>
        <dbReference type="ChEBI" id="CHEBI:597326"/>
    </ligand>
</feature>
<feature type="binding site" evidence="1">
    <location>
        <position position="345"/>
    </location>
    <ligand>
        <name>substrate</name>
    </ligand>
</feature>
<feature type="modified residue" description="N6-(pyridoxal phosphate)lysine" evidence="1">
    <location>
        <position position="235"/>
    </location>
</feature>
<accession>A1T8U6</accession>
<dbReference type="EC" id="2.3.1.47"/>
<dbReference type="EMBL" id="CP000511">
    <property type="protein sequence ID" value="ABM13596.1"/>
    <property type="molecule type" value="Genomic_DNA"/>
</dbReference>
<dbReference type="RefSeq" id="WP_011780004.1">
    <property type="nucleotide sequence ID" value="NC_008726.1"/>
</dbReference>
<dbReference type="SMR" id="A1T8U6"/>
<dbReference type="STRING" id="350058.Mvan_2789"/>
<dbReference type="KEGG" id="mva:Mvan_2789"/>
<dbReference type="eggNOG" id="COG0156">
    <property type="taxonomic scope" value="Bacteria"/>
</dbReference>
<dbReference type="HOGENOM" id="CLU_015846_11_2_11"/>
<dbReference type="UniPathway" id="UPA00078"/>
<dbReference type="Proteomes" id="UP000009159">
    <property type="component" value="Chromosome"/>
</dbReference>
<dbReference type="GO" id="GO:0008710">
    <property type="term" value="F:8-amino-7-oxononanoate synthase activity"/>
    <property type="evidence" value="ECO:0007669"/>
    <property type="project" value="UniProtKB-EC"/>
</dbReference>
<dbReference type="GO" id="GO:0030170">
    <property type="term" value="F:pyridoxal phosphate binding"/>
    <property type="evidence" value="ECO:0007669"/>
    <property type="project" value="InterPro"/>
</dbReference>
<dbReference type="GO" id="GO:0009102">
    <property type="term" value="P:biotin biosynthetic process"/>
    <property type="evidence" value="ECO:0007669"/>
    <property type="project" value="UniProtKB-UniPathway"/>
</dbReference>
<dbReference type="Gene3D" id="3.90.1150.10">
    <property type="entry name" value="Aspartate Aminotransferase, domain 1"/>
    <property type="match status" value="1"/>
</dbReference>
<dbReference type="Gene3D" id="3.40.640.10">
    <property type="entry name" value="Type I PLP-dependent aspartate aminotransferase-like (Major domain)"/>
    <property type="match status" value="1"/>
</dbReference>
<dbReference type="InterPro" id="IPR001917">
    <property type="entry name" value="Aminotrans_II_pyridoxalP_BS"/>
</dbReference>
<dbReference type="InterPro" id="IPR004839">
    <property type="entry name" value="Aminotransferase_I/II_large"/>
</dbReference>
<dbReference type="InterPro" id="IPR050087">
    <property type="entry name" value="AON_synthase_class-II"/>
</dbReference>
<dbReference type="InterPro" id="IPR015424">
    <property type="entry name" value="PyrdxlP-dep_Trfase"/>
</dbReference>
<dbReference type="InterPro" id="IPR015421">
    <property type="entry name" value="PyrdxlP-dep_Trfase_major"/>
</dbReference>
<dbReference type="InterPro" id="IPR015422">
    <property type="entry name" value="PyrdxlP-dep_Trfase_small"/>
</dbReference>
<dbReference type="PANTHER" id="PTHR13693:SF100">
    <property type="entry name" value="8-AMINO-7-OXONONANOATE SYNTHASE"/>
    <property type="match status" value="1"/>
</dbReference>
<dbReference type="PANTHER" id="PTHR13693">
    <property type="entry name" value="CLASS II AMINOTRANSFERASE/8-AMINO-7-OXONONANOATE SYNTHASE"/>
    <property type="match status" value="1"/>
</dbReference>
<dbReference type="Pfam" id="PF00155">
    <property type="entry name" value="Aminotran_1_2"/>
    <property type="match status" value="1"/>
</dbReference>
<dbReference type="SUPFAM" id="SSF53383">
    <property type="entry name" value="PLP-dependent transferases"/>
    <property type="match status" value="1"/>
</dbReference>
<dbReference type="PROSITE" id="PS00599">
    <property type="entry name" value="AA_TRANSFER_CLASS_2"/>
    <property type="match status" value="1"/>
</dbReference>
<reference key="1">
    <citation type="submission" date="2006-12" db="EMBL/GenBank/DDBJ databases">
        <title>Complete sequence of Mycobacterium vanbaalenii PYR-1.</title>
        <authorList>
            <consortium name="US DOE Joint Genome Institute"/>
            <person name="Copeland A."/>
            <person name="Lucas S."/>
            <person name="Lapidus A."/>
            <person name="Barry K."/>
            <person name="Detter J.C."/>
            <person name="Glavina del Rio T."/>
            <person name="Hammon N."/>
            <person name="Israni S."/>
            <person name="Dalin E."/>
            <person name="Tice H."/>
            <person name="Pitluck S."/>
            <person name="Singan V."/>
            <person name="Schmutz J."/>
            <person name="Larimer F."/>
            <person name="Land M."/>
            <person name="Hauser L."/>
            <person name="Kyrpides N."/>
            <person name="Anderson I.J."/>
            <person name="Miller C."/>
            <person name="Richardson P."/>
        </authorList>
    </citation>
    <scope>NUCLEOTIDE SEQUENCE [LARGE SCALE GENOMIC DNA]</scope>
    <source>
        <strain>DSM 7251 / JCM 13017 / BCRC 16820 / KCTC 9966 / NRRL B-24157 / PYR-1</strain>
    </source>
</reference>
<keyword id="KW-0012">Acyltransferase</keyword>
<keyword id="KW-0093">Biotin biosynthesis</keyword>
<keyword id="KW-0663">Pyridoxal phosphate</keyword>
<keyword id="KW-0808">Transferase</keyword>
<comment type="function">
    <text evidence="1">Catalyzes the decarboxylative condensation of pimeloyl-[acyl-carrier protein] and L-alanine to produce 8-amino-7-oxononanoate (AON), [acyl-carrier protein], and carbon dioxide.</text>
</comment>
<comment type="catalytic activity">
    <reaction>
        <text>6-carboxyhexanoyl-[ACP] + L-alanine + H(+) = (8S)-8-amino-7-oxononanoate + holo-[ACP] + CO2</text>
        <dbReference type="Rhea" id="RHEA:42288"/>
        <dbReference type="Rhea" id="RHEA-COMP:9685"/>
        <dbReference type="Rhea" id="RHEA-COMP:9955"/>
        <dbReference type="ChEBI" id="CHEBI:15378"/>
        <dbReference type="ChEBI" id="CHEBI:16526"/>
        <dbReference type="ChEBI" id="CHEBI:57972"/>
        <dbReference type="ChEBI" id="CHEBI:64479"/>
        <dbReference type="ChEBI" id="CHEBI:78846"/>
        <dbReference type="ChEBI" id="CHEBI:149468"/>
        <dbReference type="EC" id="2.3.1.47"/>
    </reaction>
</comment>
<comment type="cofactor">
    <cofactor evidence="1">
        <name>pyridoxal 5'-phosphate</name>
        <dbReference type="ChEBI" id="CHEBI:597326"/>
    </cofactor>
</comment>
<comment type="pathway">
    <text>Cofactor biosynthesis; biotin biosynthesis.</text>
</comment>
<comment type="subunit">
    <text evidence="1">Homodimer.</text>
</comment>
<comment type="similarity">
    <text evidence="2">Belongs to the class-II pyridoxal-phosphate-dependent aminotransferase family. BioF subfamily.</text>
</comment>
<evidence type="ECO:0000250" key="1"/>
<evidence type="ECO:0000305" key="2"/>